<protein>
    <recommendedName>
        <fullName>Persulfide dioxygenase ETHE1, mitochondrial</fullName>
        <ecNumber evidence="1">1.13.11.18</ecNumber>
    </recommendedName>
    <alternativeName>
        <fullName>Ethylmalonic encephalopathy protein 1 homolog</fullName>
    </alternativeName>
    <alternativeName>
        <fullName>Hepatoma subtracted clone one protein</fullName>
    </alternativeName>
    <alternativeName>
        <fullName>Sulfur dioxygenase ETHE1</fullName>
    </alternativeName>
</protein>
<comment type="function">
    <text evidence="1 2">First described as a protein that can shuttle between the nucleus and the cytoplasm and suppress p53-induced apoptosis by sequestering the transcription factor RELA/NFKB3 in the cytoplasm and preventing its accumulation in the nucleus (By similarity). Sulfur dioxygenase that plays an essential role in hydrogen sulfide catabolism in the mitochondrial matrix. Hydrogen sulfide (H(2)S) is first oxidized by SQRDL, giving rise to cysteine persulfide residues. ETHE1 consumes molecular oxygen to catalyze the oxidation of the persulfide, once it has been transferred to a thiophilic acceptor, such as glutathione (R-SSH). Plays an important role in metabolic homeostasis in mitochondria by metabolizing hydrogen sulfide and preventing the accumulation of supraphysiological H(2)S levels that have toxic effects, due to the inhibition of cytochrome c oxidase.</text>
</comment>
<comment type="catalytic activity">
    <reaction evidence="1">
        <text>S-sulfanylglutathione + O2 + H2O = sulfite + glutathione + 2 H(+)</text>
        <dbReference type="Rhea" id="RHEA:12981"/>
        <dbReference type="ChEBI" id="CHEBI:15377"/>
        <dbReference type="ChEBI" id="CHEBI:15378"/>
        <dbReference type="ChEBI" id="CHEBI:15379"/>
        <dbReference type="ChEBI" id="CHEBI:17359"/>
        <dbReference type="ChEBI" id="CHEBI:57925"/>
        <dbReference type="ChEBI" id="CHEBI:58905"/>
        <dbReference type="EC" id="1.13.11.18"/>
    </reaction>
</comment>
<comment type="cofactor">
    <cofactor evidence="1">
        <name>Fe(2+)</name>
        <dbReference type="ChEBI" id="CHEBI:29033"/>
    </cofactor>
    <text evidence="1">Binds 1 Fe(2+) ion per subunit.</text>
</comment>
<comment type="subunit">
    <text evidence="1">Homodimer. Monomer. Interacts with TST. May interact with RELA.</text>
</comment>
<comment type="subcellular location">
    <subcellularLocation>
        <location evidence="1">Cytoplasm</location>
    </subcellularLocation>
    <subcellularLocation>
        <location evidence="1">Nucleus</location>
    </subcellularLocation>
    <subcellularLocation>
        <location evidence="1">Mitochondrion matrix</location>
    </subcellularLocation>
</comment>
<comment type="disruption phenotype">
    <text evidence="2">Mice are born at slightly less than the expected Mendelian rate. Pups display growth arrest at about 15 days after birth and die five to six weeks after birth. Mice exhibit elevated levels of hydrogen sulfide (H(2)S) in liver, muscle and brain, together with increased urinary levels of ethylmalonic acid and thiosulfate. Their mitochondria show decreased cytochrome c oxidase activity, probably due to the toxic effects of supraphysiological levels of hydrogen sulfide.</text>
</comment>
<comment type="similarity">
    <text evidence="3">Belongs to the metallo-beta-lactamase superfamily. Glyoxalase II family.</text>
</comment>
<gene>
    <name type="primary">Ethe1</name>
    <name type="synonym">Hsco</name>
</gene>
<sequence length="254" mass="27739">MASAVVRVAGRRLSQQSASGAPVLLRQMFEPKSCTYTYLLGDRESREAVLIDPVLETAHRDAQLIKELGLKLLYAVNTHCHADHITGTGVLRSLLPGCQSVISRLSGAQADLHIGEGDSIRFGRFALETRASPGHTPGCVTFVLNDQSMAFTGDALLIRGCGRTDFQQGCAKTLYHSVHEKIFTLPGNCLIYPAHDYHGLTVSTVEEERTLNPRLTLSCEEFIKVMDNLNLPKPQQIDIAVPANMRCGVQTPPS</sequence>
<accession>Q9DCM0</accession>
<accession>Q9ESL5</accession>
<evidence type="ECO:0000250" key="1">
    <source>
        <dbReference type="UniProtKB" id="O95571"/>
    </source>
</evidence>
<evidence type="ECO:0000269" key="2">
    <source>
    </source>
</evidence>
<evidence type="ECO:0000305" key="3"/>
<evidence type="ECO:0007744" key="4">
    <source>
    </source>
</evidence>
<evidence type="ECO:0007744" key="5">
    <source>
    </source>
</evidence>
<evidence type="ECO:0007744" key="6">
    <source>
    </source>
</evidence>
<reference key="1">
    <citation type="submission" date="2000-10" db="EMBL/GenBank/DDBJ databases">
        <title>Expression of HSCO in hepatomas.</title>
        <authorList>
            <person name="Fujita J."/>
            <person name="Higashitsuji H."/>
            <person name="Higashitsuji H."/>
        </authorList>
    </citation>
    <scope>NUCLEOTIDE SEQUENCE [MRNA]</scope>
    <source>
        <tissue>Liver</tissue>
    </source>
</reference>
<reference key="2">
    <citation type="journal article" date="2005" name="Science">
        <title>The transcriptional landscape of the mammalian genome.</title>
        <authorList>
            <person name="Carninci P."/>
            <person name="Kasukawa T."/>
            <person name="Katayama S."/>
            <person name="Gough J."/>
            <person name="Frith M.C."/>
            <person name="Maeda N."/>
            <person name="Oyama R."/>
            <person name="Ravasi T."/>
            <person name="Lenhard B."/>
            <person name="Wells C."/>
            <person name="Kodzius R."/>
            <person name="Shimokawa K."/>
            <person name="Bajic V.B."/>
            <person name="Brenner S.E."/>
            <person name="Batalov S."/>
            <person name="Forrest A.R."/>
            <person name="Zavolan M."/>
            <person name="Davis M.J."/>
            <person name="Wilming L.G."/>
            <person name="Aidinis V."/>
            <person name="Allen J.E."/>
            <person name="Ambesi-Impiombato A."/>
            <person name="Apweiler R."/>
            <person name="Aturaliya R.N."/>
            <person name="Bailey T.L."/>
            <person name="Bansal M."/>
            <person name="Baxter L."/>
            <person name="Beisel K.W."/>
            <person name="Bersano T."/>
            <person name="Bono H."/>
            <person name="Chalk A.M."/>
            <person name="Chiu K.P."/>
            <person name="Choudhary V."/>
            <person name="Christoffels A."/>
            <person name="Clutterbuck D.R."/>
            <person name="Crowe M.L."/>
            <person name="Dalla E."/>
            <person name="Dalrymple B.P."/>
            <person name="de Bono B."/>
            <person name="Della Gatta G."/>
            <person name="di Bernardo D."/>
            <person name="Down T."/>
            <person name="Engstrom P."/>
            <person name="Fagiolini M."/>
            <person name="Faulkner G."/>
            <person name="Fletcher C.F."/>
            <person name="Fukushima T."/>
            <person name="Furuno M."/>
            <person name="Futaki S."/>
            <person name="Gariboldi M."/>
            <person name="Georgii-Hemming P."/>
            <person name="Gingeras T.R."/>
            <person name="Gojobori T."/>
            <person name="Green R.E."/>
            <person name="Gustincich S."/>
            <person name="Harbers M."/>
            <person name="Hayashi Y."/>
            <person name="Hensch T.K."/>
            <person name="Hirokawa N."/>
            <person name="Hill D."/>
            <person name="Huminiecki L."/>
            <person name="Iacono M."/>
            <person name="Ikeo K."/>
            <person name="Iwama A."/>
            <person name="Ishikawa T."/>
            <person name="Jakt M."/>
            <person name="Kanapin A."/>
            <person name="Katoh M."/>
            <person name="Kawasawa Y."/>
            <person name="Kelso J."/>
            <person name="Kitamura H."/>
            <person name="Kitano H."/>
            <person name="Kollias G."/>
            <person name="Krishnan S.P."/>
            <person name="Kruger A."/>
            <person name="Kummerfeld S.K."/>
            <person name="Kurochkin I.V."/>
            <person name="Lareau L.F."/>
            <person name="Lazarevic D."/>
            <person name="Lipovich L."/>
            <person name="Liu J."/>
            <person name="Liuni S."/>
            <person name="McWilliam S."/>
            <person name="Madan Babu M."/>
            <person name="Madera M."/>
            <person name="Marchionni L."/>
            <person name="Matsuda H."/>
            <person name="Matsuzawa S."/>
            <person name="Miki H."/>
            <person name="Mignone F."/>
            <person name="Miyake S."/>
            <person name="Morris K."/>
            <person name="Mottagui-Tabar S."/>
            <person name="Mulder N."/>
            <person name="Nakano N."/>
            <person name="Nakauchi H."/>
            <person name="Ng P."/>
            <person name="Nilsson R."/>
            <person name="Nishiguchi S."/>
            <person name="Nishikawa S."/>
            <person name="Nori F."/>
            <person name="Ohara O."/>
            <person name="Okazaki Y."/>
            <person name="Orlando V."/>
            <person name="Pang K.C."/>
            <person name="Pavan W.J."/>
            <person name="Pavesi G."/>
            <person name="Pesole G."/>
            <person name="Petrovsky N."/>
            <person name="Piazza S."/>
            <person name="Reed J."/>
            <person name="Reid J.F."/>
            <person name="Ring B.Z."/>
            <person name="Ringwald M."/>
            <person name="Rost B."/>
            <person name="Ruan Y."/>
            <person name="Salzberg S.L."/>
            <person name="Sandelin A."/>
            <person name="Schneider C."/>
            <person name="Schoenbach C."/>
            <person name="Sekiguchi K."/>
            <person name="Semple C.A."/>
            <person name="Seno S."/>
            <person name="Sessa L."/>
            <person name="Sheng Y."/>
            <person name="Shibata Y."/>
            <person name="Shimada H."/>
            <person name="Shimada K."/>
            <person name="Silva D."/>
            <person name="Sinclair B."/>
            <person name="Sperling S."/>
            <person name="Stupka E."/>
            <person name="Sugiura K."/>
            <person name="Sultana R."/>
            <person name="Takenaka Y."/>
            <person name="Taki K."/>
            <person name="Tammoja K."/>
            <person name="Tan S.L."/>
            <person name="Tang S."/>
            <person name="Taylor M.S."/>
            <person name="Tegner J."/>
            <person name="Teichmann S.A."/>
            <person name="Ueda H.R."/>
            <person name="van Nimwegen E."/>
            <person name="Verardo R."/>
            <person name="Wei C.L."/>
            <person name="Yagi K."/>
            <person name="Yamanishi H."/>
            <person name="Zabarovsky E."/>
            <person name="Zhu S."/>
            <person name="Zimmer A."/>
            <person name="Hide W."/>
            <person name="Bult C."/>
            <person name="Grimmond S.M."/>
            <person name="Teasdale R.D."/>
            <person name="Liu E.T."/>
            <person name="Brusic V."/>
            <person name="Quackenbush J."/>
            <person name="Wahlestedt C."/>
            <person name="Mattick J.S."/>
            <person name="Hume D.A."/>
            <person name="Kai C."/>
            <person name="Sasaki D."/>
            <person name="Tomaru Y."/>
            <person name="Fukuda S."/>
            <person name="Kanamori-Katayama M."/>
            <person name="Suzuki M."/>
            <person name="Aoki J."/>
            <person name="Arakawa T."/>
            <person name="Iida J."/>
            <person name="Imamura K."/>
            <person name="Itoh M."/>
            <person name="Kato T."/>
            <person name="Kawaji H."/>
            <person name="Kawagashira N."/>
            <person name="Kawashima T."/>
            <person name="Kojima M."/>
            <person name="Kondo S."/>
            <person name="Konno H."/>
            <person name="Nakano K."/>
            <person name="Ninomiya N."/>
            <person name="Nishio T."/>
            <person name="Okada M."/>
            <person name="Plessy C."/>
            <person name="Shibata K."/>
            <person name="Shiraki T."/>
            <person name="Suzuki S."/>
            <person name="Tagami M."/>
            <person name="Waki K."/>
            <person name="Watahiki A."/>
            <person name="Okamura-Oho Y."/>
            <person name="Suzuki H."/>
            <person name="Kawai J."/>
            <person name="Hayashizaki Y."/>
        </authorList>
    </citation>
    <scope>NUCLEOTIDE SEQUENCE [LARGE SCALE MRNA]</scope>
    <source>
        <strain>C57BL/6J</strain>
        <tissue>Kidney</tissue>
    </source>
</reference>
<reference key="3">
    <citation type="journal article" date="2004" name="Genome Res.">
        <title>The status, quality, and expansion of the NIH full-length cDNA project: the Mammalian Gene Collection (MGC).</title>
        <authorList>
            <consortium name="The MGC Project Team"/>
        </authorList>
    </citation>
    <scope>NUCLEOTIDE SEQUENCE [LARGE SCALE MRNA]</scope>
    <source>
        <strain>FVB/N</strain>
        <tissue>Colon</tissue>
        <tissue>Kidney</tissue>
        <tissue>Mammary tumor</tissue>
    </source>
</reference>
<reference key="4">
    <citation type="journal article" date="2009" name="Nat. Med.">
        <title>Loss of ETHE1, a mitochondrial dioxygenase, causes fatal sulfide toxicity in ethylmalonic encephalopathy.</title>
        <authorList>
            <person name="Tiranti V."/>
            <person name="Viscomi C."/>
            <person name="Hildebrandt T."/>
            <person name="Di Meo I."/>
            <person name="Mineri R."/>
            <person name="Tiveron C."/>
            <person name="Levitt M.D."/>
            <person name="Prelle A."/>
            <person name="Fagiolari G."/>
            <person name="Rimoldi M."/>
            <person name="Zeviani M."/>
        </authorList>
    </citation>
    <scope>DISRUPTION PHENOTYPE</scope>
    <scope>FUNCTION</scope>
</reference>
<reference key="5">
    <citation type="journal article" date="2010" name="Cell">
        <title>A tissue-specific atlas of mouse protein phosphorylation and expression.</title>
        <authorList>
            <person name="Huttlin E.L."/>
            <person name="Jedrychowski M.P."/>
            <person name="Elias J.E."/>
            <person name="Goswami T."/>
            <person name="Rad R."/>
            <person name="Beausoleil S.A."/>
            <person name="Villen J."/>
            <person name="Haas W."/>
            <person name="Sowa M.E."/>
            <person name="Gygi S.P."/>
        </authorList>
    </citation>
    <scope>PHOSPHORYLATION [LARGE SCALE ANALYSIS] AT SER-14 AND SER-17</scope>
    <scope>IDENTIFICATION BY MASS SPECTROMETRY [LARGE SCALE ANALYSIS]</scope>
    <source>
        <tissue>Brain</tissue>
        <tissue>Brown adipose tissue</tissue>
        <tissue>Heart</tissue>
        <tissue>Kidney</tissue>
        <tissue>Liver</tissue>
        <tissue>Lung</tissue>
        <tissue>Pancreas</tissue>
        <tissue>Spleen</tissue>
    </source>
</reference>
<reference key="6">
    <citation type="journal article" date="2013" name="Mol. Cell">
        <title>SIRT5-mediated lysine desuccinylation impacts diverse metabolic pathways.</title>
        <authorList>
            <person name="Park J."/>
            <person name="Chen Y."/>
            <person name="Tishkoff D.X."/>
            <person name="Peng C."/>
            <person name="Tan M."/>
            <person name="Dai L."/>
            <person name="Xie Z."/>
            <person name="Zhang Y."/>
            <person name="Zwaans B.M."/>
            <person name="Skinner M.E."/>
            <person name="Lombard D.B."/>
            <person name="Zhao Y."/>
        </authorList>
    </citation>
    <scope>SUCCINYLATION [LARGE SCALE ANALYSIS] AT LYS-32 AND LYS-172</scope>
    <scope>IDENTIFICATION BY MASS SPECTROMETRY [LARGE SCALE ANALYSIS]</scope>
    <source>
        <tissue>Liver</tissue>
    </source>
</reference>
<reference key="7">
    <citation type="journal article" date="2013" name="Proc. Natl. Acad. Sci. U.S.A.">
        <title>Label-free quantitative proteomics of the lysine acetylome in mitochondria identifies substrates of SIRT3 in metabolic pathways.</title>
        <authorList>
            <person name="Rardin M.J."/>
            <person name="Newman J.C."/>
            <person name="Held J.M."/>
            <person name="Cusack M.P."/>
            <person name="Sorensen D.J."/>
            <person name="Li B."/>
            <person name="Schilling B."/>
            <person name="Mooney S.D."/>
            <person name="Kahn C.R."/>
            <person name="Verdin E."/>
            <person name="Gibson B.W."/>
        </authorList>
    </citation>
    <scope>ACETYLATION [LARGE SCALE ANALYSIS] AT LYS-32; LYS-66 AND LYS-172</scope>
    <scope>IDENTIFICATION BY MASS SPECTROMETRY [LARGE SCALE ANALYSIS]</scope>
    <source>
        <tissue>Liver</tissue>
    </source>
</reference>
<keyword id="KW-0007">Acetylation</keyword>
<keyword id="KW-0963">Cytoplasm</keyword>
<keyword id="KW-0223">Dioxygenase</keyword>
<keyword id="KW-0408">Iron</keyword>
<keyword id="KW-0479">Metal-binding</keyword>
<keyword id="KW-0496">Mitochondrion</keyword>
<keyword id="KW-0539">Nucleus</keyword>
<keyword id="KW-0560">Oxidoreductase</keyword>
<keyword id="KW-0597">Phosphoprotein</keyword>
<keyword id="KW-1185">Reference proteome</keyword>
<keyword id="KW-0809">Transit peptide</keyword>
<proteinExistence type="evidence at protein level"/>
<feature type="transit peptide" description="Mitochondrion" evidence="1">
    <location>
        <begin position="1"/>
        <end position="7"/>
    </location>
</feature>
<feature type="chain" id="PRO_0000012290" description="Persulfide dioxygenase ETHE1, mitochondrial">
    <location>
        <begin position="8"/>
        <end position="254"/>
    </location>
</feature>
<feature type="binding site" evidence="1">
    <location>
        <position position="79"/>
    </location>
    <ligand>
        <name>Fe cation</name>
        <dbReference type="ChEBI" id="CHEBI:24875"/>
        <note>catalytic</note>
    </ligand>
</feature>
<feature type="binding site" evidence="1">
    <location>
        <position position="135"/>
    </location>
    <ligand>
        <name>Fe cation</name>
        <dbReference type="ChEBI" id="CHEBI:24875"/>
        <note>catalytic</note>
    </ligand>
</feature>
<feature type="binding site" evidence="1">
    <location>
        <position position="154"/>
    </location>
    <ligand>
        <name>Fe cation</name>
        <dbReference type="ChEBI" id="CHEBI:24875"/>
        <note>catalytic</note>
    </ligand>
</feature>
<feature type="modified residue" description="Phosphoserine" evidence="4">
    <location>
        <position position="14"/>
    </location>
</feature>
<feature type="modified residue" description="Phosphoserine" evidence="4">
    <location>
        <position position="17"/>
    </location>
</feature>
<feature type="modified residue" description="Phosphoserine" evidence="1">
    <location>
        <position position="19"/>
    </location>
</feature>
<feature type="modified residue" description="N6-acetyllysine; alternate" evidence="5">
    <location>
        <position position="32"/>
    </location>
</feature>
<feature type="modified residue" description="N6-succinyllysine; alternate" evidence="6">
    <location>
        <position position="32"/>
    </location>
</feature>
<feature type="modified residue" description="N6-acetyllysine" evidence="5">
    <location>
        <position position="66"/>
    </location>
</feature>
<feature type="modified residue" description="N6-acetyllysine; alternate" evidence="5">
    <location>
        <position position="172"/>
    </location>
</feature>
<feature type="modified residue" description="N6-succinyllysine; alternate" evidence="6">
    <location>
        <position position="172"/>
    </location>
</feature>
<name>ETHE1_MOUSE</name>
<organism>
    <name type="scientific">Mus musculus</name>
    <name type="common">Mouse</name>
    <dbReference type="NCBI Taxonomy" id="10090"/>
    <lineage>
        <taxon>Eukaryota</taxon>
        <taxon>Metazoa</taxon>
        <taxon>Chordata</taxon>
        <taxon>Craniata</taxon>
        <taxon>Vertebrata</taxon>
        <taxon>Euteleostomi</taxon>
        <taxon>Mammalia</taxon>
        <taxon>Eutheria</taxon>
        <taxon>Euarchontoglires</taxon>
        <taxon>Glires</taxon>
        <taxon>Rodentia</taxon>
        <taxon>Myomorpha</taxon>
        <taxon>Muroidea</taxon>
        <taxon>Muridae</taxon>
        <taxon>Murinae</taxon>
        <taxon>Mus</taxon>
        <taxon>Mus</taxon>
    </lineage>
</organism>
<dbReference type="EC" id="1.13.11.18" evidence="1"/>
<dbReference type="EMBL" id="AB049623">
    <property type="protein sequence ID" value="BAB16409.1"/>
    <property type="molecule type" value="mRNA"/>
</dbReference>
<dbReference type="EMBL" id="AK002666">
    <property type="protein sequence ID" value="BAB22271.2"/>
    <property type="molecule type" value="mRNA"/>
</dbReference>
<dbReference type="EMBL" id="BC010592">
    <property type="protein sequence ID" value="AAH10592.1"/>
    <property type="molecule type" value="mRNA"/>
</dbReference>
<dbReference type="EMBL" id="BC083162">
    <property type="protein sequence ID" value="AAH83162.1"/>
    <property type="molecule type" value="mRNA"/>
</dbReference>
<dbReference type="EMBL" id="BC094044">
    <property type="protein sequence ID" value="AAH94044.1"/>
    <property type="molecule type" value="mRNA"/>
</dbReference>
<dbReference type="CCDS" id="CCDS20957.1"/>
<dbReference type="RefSeq" id="NP_001350943.1">
    <property type="nucleotide sequence ID" value="NM_001364014.1"/>
</dbReference>
<dbReference type="RefSeq" id="NP_075643.1">
    <property type="nucleotide sequence ID" value="NM_023154.4"/>
</dbReference>
<dbReference type="RefSeq" id="XP_017167710.1">
    <property type="nucleotide sequence ID" value="XM_017312221.1"/>
</dbReference>
<dbReference type="RefSeq" id="XP_030098739.1">
    <property type="nucleotide sequence ID" value="XM_030242879.1"/>
</dbReference>
<dbReference type="RefSeq" id="XP_030098740.1">
    <property type="nucleotide sequence ID" value="XM_030242880.1"/>
</dbReference>
<dbReference type="RefSeq" id="XP_030098741.1">
    <property type="nucleotide sequence ID" value="XM_030242881.1"/>
</dbReference>
<dbReference type="SMR" id="Q9DCM0"/>
<dbReference type="BioGRID" id="211193">
    <property type="interactions" value="4"/>
</dbReference>
<dbReference type="FunCoup" id="Q9DCM0">
    <property type="interactions" value="1522"/>
</dbReference>
<dbReference type="STRING" id="10090.ENSMUSP00000076433"/>
<dbReference type="iPTMnet" id="Q9DCM0"/>
<dbReference type="PhosphoSitePlus" id="Q9DCM0"/>
<dbReference type="SwissPalm" id="Q9DCM0"/>
<dbReference type="REPRODUCTION-2DPAGE" id="Q9DCM0"/>
<dbReference type="jPOST" id="Q9DCM0"/>
<dbReference type="PaxDb" id="10090-ENSMUSP00000076433"/>
<dbReference type="PeptideAtlas" id="Q9DCM0"/>
<dbReference type="ProteomicsDB" id="271503"/>
<dbReference type="Pumba" id="Q9DCM0"/>
<dbReference type="Antibodypedia" id="31059">
    <property type="antibodies" value="255 antibodies from 27 providers"/>
</dbReference>
<dbReference type="DNASU" id="66071"/>
<dbReference type="Ensembl" id="ENSMUST00000077191.7">
    <property type="protein sequence ID" value="ENSMUSP00000076433.7"/>
    <property type="gene ID" value="ENSMUSG00000064254.7"/>
</dbReference>
<dbReference type="GeneID" id="66071"/>
<dbReference type="KEGG" id="mmu:66071"/>
<dbReference type="UCSC" id="uc009fqb.2">
    <property type="organism name" value="mouse"/>
</dbReference>
<dbReference type="AGR" id="MGI:1913321"/>
<dbReference type="CTD" id="23474"/>
<dbReference type="MGI" id="MGI:1913321">
    <property type="gene designation" value="Ethe1"/>
</dbReference>
<dbReference type="VEuPathDB" id="HostDB:ENSMUSG00000064254"/>
<dbReference type="eggNOG" id="KOG0814">
    <property type="taxonomic scope" value="Eukaryota"/>
</dbReference>
<dbReference type="GeneTree" id="ENSGT00940000159046"/>
<dbReference type="HOGENOM" id="CLU_030571_7_0_1"/>
<dbReference type="InParanoid" id="Q9DCM0"/>
<dbReference type="OMA" id="VMDIDYA"/>
<dbReference type="OrthoDB" id="449487at2759"/>
<dbReference type="PhylomeDB" id="Q9DCM0"/>
<dbReference type="TreeFam" id="TF312952"/>
<dbReference type="Reactome" id="R-MMU-1614517">
    <property type="pathway name" value="Sulfide oxidation to sulfate"/>
</dbReference>
<dbReference type="BioGRID-ORCS" id="66071">
    <property type="hits" value="3 hits in 78 CRISPR screens"/>
</dbReference>
<dbReference type="ChiTaRS" id="Ethe1">
    <property type="organism name" value="mouse"/>
</dbReference>
<dbReference type="PRO" id="PR:Q9DCM0"/>
<dbReference type="Proteomes" id="UP000000589">
    <property type="component" value="Chromosome 7"/>
</dbReference>
<dbReference type="RNAct" id="Q9DCM0">
    <property type="molecule type" value="protein"/>
</dbReference>
<dbReference type="Bgee" id="ENSMUSG00000064254">
    <property type="expression patterns" value="Expressed in right colon and 240 other cell types or tissues"/>
</dbReference>
<dbReference type="GO" id="GO:0005759">
    <property type="term" value="C:mitochondrial matrix"/>
    <property type="evidence" value="ECO:0007669"/>
    <property type="project" value="UniProtKB-SubCell"/>
</dbReference>
<dbReference type="GO" id="GO:0005739">
    <property type="term" value="C:mitochondrion"/>
    <property type="evidence" value="ECO:0007005"/>
    <property type="project" value="MGI"/>
</dbReference>
<dbReference type="GO" id="GO:0005654">
    <property type="term" value="C:nucleoplasm"/>
    <property type="evidence" value="ECO:0007669"/>
    <property type="project" value="Ensembl"/>
</dbReference>
<dbReference type="GO" id="GO:0042802">
    <property type="term" value="F:identical protein binding"/>
    <property type="evidence" value="ECO:0007669"/>
    <property type="project" value="Ensembl"/>
</dbReference>
<dbReference type="GO" id="GO:0005506">
    <property type="term" value="F:iron ion binding"/>
    <property type="evidence" value="ECO:0000250"/>
    <property type="project" value="UniProtKB"/>
</dbReference>
<dbReference type="GO" id="GO:0050313">
    <property type="term" value="F:sulfur dioxygenase activity"/>
    <property type="evidence" value="ECO:0000250"/>
    <property type="project" value="UniProtKB"/>
</dbReference>
<dbReference type="GO" id="GO:0006749">
    <property type="term" value="P:glutathione metabolic process"/>
    <property type="evidence" value="ECO:0000250"/>
    <property type="project" value="UniProtKB"/>
</dbReference>
<dbReference type="GO" id="GO:0070813">
    <property type="term" value="P:hydrogen sulfide metabolic process"/>
    <property type="evidence" value="ECO:0000250"/>
    <property type="project" value="UniProtKB"/>
</dbReference>
<dbReference type="CDD" id="cd07724">
    <property type="entry name" value="POD-like_MBL-fold"/>
    <property type="match status" value="1"/>
</dbReference>
<dbReference type="FunFam" id="3.60.15.10:FF:000013">
    <property type="entry name" value="Persulfide dioxygenase ETHE1, mitochondrial"/>
    <property type="match status" value="1"/>
</dbReference>
<dbReference type="Gene3D" id="3.60.15.10">
    <property type="entry name" value="Ribonuclease Z/Hydroxyacylglutathione hydrolase-like"/>
    <property type="match status" value="1"/>
</dbReference>
<dbReference type="InterPro" id="IPR001279">
    <property type="entry name" value="Metallo-B-lactamas"/>
</dbReference>
<dbReference type="InterPro" id="IPR051682">
    <property type="entry name" value="Mito_Persulfide_Diox"/>
</dbReference>
<dbReference type="InterPro" id="IPR044528">
    <property type="entry name" value="POD-like_MBL-fold"/>
</dbReference>
<dbReference type="InterPro" id="IPR036866">
    <property type="entry name" value="RibonucZ/Hydroxyglut_hydro"/>
</dbReference>
<dbReference type="PANTHER" id="PTHR43084">
    <property type="entry name" value="PERSULFIDE DIOXYGENASE ETHE1"/>
    <property type="match status" value="1"/>
</dbReference>
<dbReference type="PANTHER" id="PTHR43084:SF1">
    <property type="entry name" value="PERSULFIDE DIOXYGENASE ETHE1, MITOCHONDRIAL"/>
    <property type="match status" value="1"/>
</dbReference>
<dbReference type="Pfam" id="PF00753">
    <property type="entry name" value="Lactamase_B"/>
    <property type="match status" value="1"/>
</dbReference>
<dbReference type="SMART" id="SM00849">
    <property type="entry name" value="Lactamase_B"/>
    <property type="match status" value="1"/>
</dbReference>
<dbReference type="SUPFAM" id="SSF56281">
    <property type="entry name" value="Metallo-hydrolase/oxidoreductase"/>
    <property type="match status" value="1"/>
</dbReference>